<gene>
    <name type="primary">rib-2</name>
    <name type="ORF">K01G5.6</name>
</gene>
<feature type="chain" id="PRO_0000149663" description="Exostosin-like-3 homolog">
    <location>
        <begin position="1"/>
        <end position="814"/>
    </location>
</feature>
<feature type="topological domain" description="Cytoplasmic" evidence="3">
    <location>
        <begin position="1"/>
        <end position="14"/>
    </location>
</feature>
<feature type="transmembrane region" description="Helical; Signal-anchor for type II membrane protein" evidence="3">
    <location>
        <begin position="15"/>
        <end position="35"/>
    </location>
</feature>
<feature type="topological domain" description="Lumenal" evidence="3">
    <location>
        <begin position="36"/>
        <end position="814"/>
    </location>
</feature>
<feature type="active site" evidence="2">
    <location>
        <position position="728"/>
    </location>
</feature>
<feature type="binding site" evidence="2">
    <location>
        <position position="570"/>
    </location>
    <ligand>
        <name>UDP-N-acetyl-alpha-D-glucosamine</name>
        <dbReference type="ChEBI" id="CHEBI:57705"/>
    </ligand>
</feature>
<feature type="binding site" evidence="2">
    <location>
        <position position="595"/>
    </location>
    <ligand>
        <name>UDP-N-acetyl-alpha-D-glucosamine</name>
        <dbReference type="ChEBI" id="CHEBI:57705"/>
    </ligand>
</feature>
<feature type="binding site" evidence="2">
    <location>
        <position position="620"/>
    </location>
    <ligand>
        <name>UDP-N-acetyl-alpha-D-glucosamine</name>
        <dbReference type="ChEBI" id="CHEBI:57705"/>
    </ligand>
</feature>
<feature type="binding site" evidence="2">
    <location>
        <position position="625"/>
    </location>
    <ligand>
        <name>UDP-N-acetyl-alpha-D-glucosamine</name>
        <dbReference type="ChEBI" id="CHEBI:57705"/>
    </ligand>
</feature>
<feature type="binding site" evidence="2">
    <location>
        <position position="641"/>
    </location>
    <ligand>
        <name>UDP-N-acetyl-alpha-D-glucosamine</name>
        <dbReference type="ChEBI" id="CHEBI:57705"/>
    </ligand>
</feature>
<feature type="binding site" evidence="2">
    <location>
        <position position="642"/>
    </location>
    <ligand>
        <name>UDP-N-acetyl-alpha-D-glucosamine</name>
        <dbReference type="ChEBI" id="CHEBI:57705"/>
    </ligand>
</feature>
<feature type="binding site" evidence="2">
    <location>
        <position position="643"/>
    </location>
    <ligand>
        <name>Mn(2+)</name>
        <dbReference type="ChEBI" id="CHEBI:29035"/>
        <note>catalytic</note>
    </ligand>
</feature>
<feature type="binding site" evidence="2">
    <location>
        <position position="643"/>
    </location>
    <ligand>
        <name>UDP-N-acetyl-alpha-D-glucosamine</name>
        <dbReference type="ChEBI" id="CHEBI:57705"/>
    </ligand>
</feature>
<feature type="binding site" evidence="2">
    <location>
        <position position="727"/>
    </location>
    <ligand>
        <name>UDP-N-acetyl-alpha-D-glucosamine</name>
        <dbReference type="ChEBI" id="CHEBI:57705"/>
    </ligand>
</feature>
<feature type="binding site" evidence="2">
    <location>
        <position position="728"/>
    </location>
    <ligand>
        <name>UDP-N-acetyl-alpha-D-glucosamine</name>
        <dbReference type="ChEBI" id="CHEBI:57705"/>
    </ligand>
</feature>
<feature type="binding site" evidence="2">
    <location>
        <position position="771"/>
    </location>
    <ligand>
        <name>UDP-N-acetyl-alpha-D-glucosamine</name>
        <dbReference type="ChEBI" id="CHEBI:57705"/>
    </ligand>
</feature>
<feature type="glycosylation site" description="N-linked (GlcNAc...) asparagine" evidence="3">
    <location>
        <position position="36"/>
    </location>
</feature>
<feature type="glycosylation site" description="N-linked (GlcNAc...) asparagine" evidence="3">
    <location>
        <position position="227"/>
    </location>
</feature>
<feature type="glycosylation site" description="N-linked (GlcNAc...) asparagine" evidence="3">
    <location>
        <position position="297"/>
    </location>
</feature>
<feature type="glycosylation site" description="N-linked (GlcNAc...) asparagine" evidence="3">
    <location>
        <position position="322"/>
    </location>
</feature>
<feature type="glycosylation site" description="N-linked (GlcNAc...) asparagine" evidence="3">
    <location>
        <position position="454"/>
    </location>
</feature>
<feature type="glycosylation site" description="N-linked (GlcNAc...) asparagine" evidence="3">
    <location>
        <position position="492"/>
    </location>
</feature>
<feature type="glycosylation site" description="N-linked (GlcNAc...) asparagine" evidence="3">
    <location>
        <position position="685"/>
    </location>
</feature>
<feature type="disulfide bond" evidence="2">
    <location>
        <begin position="726"/>
        <end position="774"/>
    </location>
</feature>
<feature type="sequence conflict" description="In Ref. 1; AAC47510." evidence="10" ref="1">
    <original>T</original>
    <variation>S</variation>
    <location>
        <position position="604"/>
    </location>
</feature>
<keyword id="KW-1015">Disulfide bond</keyword>
<keyword id="KW-0256">Endoplasmic reticulum</keyword>
<keyword id="KW-0325">Glycoprotein</keyword>
<keyword id="KW-0328">Glycosyltransferase</keyword>
<keyword id="KW-0333">Golgi apparatus</keyword>
<keyword id="KW-0464">Manganese</keyword>
<keyword id="KW-0472">Membrane</keyword>
<keyword id="KW-0479">Metal-binding</keyword>
<keyword id="KW-1185">Reference proteome</keyword>
<keyword id="KW-0735">Signal-anchor</keyword>
<keyword id="KW-0808">Transferase</keyword>
<keyword id="KW-0812">Transmembrane</keyword>
<keyword id="KW-1133">Transmembrane helix</keyword>
<protein>
    <recommendedName>
        <fullName evidence="10">Exostosin-like-3 homolog</fullName>
        <ecNumber evidence="4 6">2.4.1.223</ecNumber>
        <ecNumber evidence="4 6">2.4.1.224</ecNumber>
        <ecNumber evidence="6">2.4.1.225</ecNumber>
    </recommendedName>
    <alternativeName>
        <fullName evidence="11">Glucuronyl-galactosyl-proteoglycan 4-alpha-N- acetylglucosaminyltransferase</fullName>
        <shortName evidence="8">GlcNAc transferase I</shortName>
        <shortName evidence="9">GlcNAcT-I</shortName>
    </alternativeName>
    <alternativeName>
        <fullName>Glucuronyl-galactosyl-proteoglycan/Glucuronosyl-N-acetylglucosaminyl-proteoglycan 4-alpha-N-acetylglucosaminyltransferase</fullName>
        <shortName evidence="9">GlcAT-II</shortName>
        <shortName evidence="9">GlcNAc transferase II</shortName>
        <shortName evidence="9">GlcNAcT-II</shortName>
        <shortName evidence="9">Glucuronyl transferase II</shortName>
    </alternativeName>
    <alternativeName>
        <fullName>Multiple exostoses homolog 2</fullName>
    </alternativeName>
</protein>
<dbReference type="EC" id="2.4.1.223" evidence="4 6"/>
<dbReference type="EC" id="2.4.1.224" evidence="4 6"/>
<dbReference type="EC" id="2.4.1.225" evidence="6"/>
<dbReference type="EMBL" id="U94835">
    <property type="protein sequence ID" value="AAC47510.1"/>
    <property type="molecule type" value="mRNA"/>
</dbReference>
<dbReference type="EMBL" id="AB077851">
    <property type="protein sequence ID" value="BAB83878.1"/>
    <property type="molecule type" value="mRNA"/>
</dbReference>
<dbReference type="EMBL" id="Z92803">
    <property type="protein sequence ID" value="CAB07245.1"/>
    <property type="molecule type" value="Genomic_DNA"/>
</dbReference>
<dbReference type="PIR" id="T23200">
    <property type="entry name" value="T23200"/>
</dbReference>
<dbReference type="RefSeq" id="NP_499368.1">
    <property type="nucleotide sequence ID" value="NM_066967.9"/>
</dbReference>
<dbReference type="SMR" id="O01705"/>
<dbReference type="BioGRID" id="41689">
    <property type="interactions" value="1"/>
</dbReference>
<dbReference type="FunCoup" id="O01705">
    <property type="interactions" value="2277"/>
</dbReference>
<dbReference type="STRING" id="6239.K01G5.6.2"/>
<dbReference type="CAZy" id="GT47">
    <property type="family name" value="Glycosyltransferase Family 47"/>
</dbReference>
<dbReference type="CAZy" id="GT64">
    <property type="family name" value="Glycosyltransferase Family 64"/>
</dbReference>
<dbReference type="GlyCosmos" id="O01705">
    <property type="glycosylation" value="7 sites, No reported glycans"/>
</dbReference>
<dbReference type="PaxDb" id="6239-K01G5.6"/>
<dbReference type="EnsemblMetazoa" id="K01G5.6.1">
    <property type="protein sequence ID" value="K01G5.6.1"/>
    <property type="gene ID" value="WBGene00004361"/>
</dbReference>
<dbReference type="GeneID" id="176502"/>
<dbReference type="KEGG" id="cel:CELE_K01G5.6"/>
<dbReference type="UCSC" id="K01G5.6">
    <property type="organism name" value="c. elegans"/>
</dbReference>
<dbReference type="AGR" id="WB:WBGene00004361"/>
<dbReference type="CTD" id="176502"/>
<dbReference type="WormBase" id="K01G5.6">
    <property type="protein sequence ID" value="CE16196"/>
    <property type="gene ID" value="WBGene00004361"/>
    <property type="gene designation" value="rib-2"/>
</dbReference>
<dbReference type="eggNOG" id="KOG2264">
    <property type="taxonomic scope" value="Eukaryota"/>
</dbReference>
<dbReference type="GeneTree" id="ENSGT00940000156692"/>
<dbReference type="HOGENOM" id="CLU_013906_3_0_1"/>
<dbReference type="InParanoid" id="O01705"/>
<dbReference type="OMA" id="IDWRRAT"/>
<dbReference type="OrthoDB" id="5954868at2759"/>
<dbReference type="PhylomeDB" id="O01705"/>
<dbReference type="UniPathway" id="UPA00756"/>
<dbReference type="PRO" id="PR:O01705"/>
<dbReference type="Proteomes" id="UP000001940">
    <property type="component" value="Chromosome III"/>
</dbReference>
<dbReference type="Bgee" id="WBGene00004361">
    <property type="expression patterns" value="Expressed in germ line (C elegans) and 4 other cell types or tissues"/>
</dbReference>
<dbReference type="GO" id="GO:0005789">
    <property type="term" value="C:endoplasmic reticulum membrane"/>
    <property type="evidence" value="ECO:0007669"/>
    <property type="project" value="UniProtKB-SubCell"/>
</dbReference>
<dbReference type="GO" id="GO:0005794">
    <property type="term" value="C:Golgi apparatus"/>
    <property type="evidence" value="ECO:0000318"/>
    <property type="project" value="GO_Central"/>
</dbReference>
<dbReference type="GO" id="GO:0000139">
    <property type="term" value="C:Golgi membrane"/>
    <property type="evidence" value="ECO:0007669"/>
    <property type="project" value="UniProtKB-SubCell"/>
</dbReference>
<dbReference type="GO" id="GO:0032991">
    <property type="term" value="C:protein-containing complex"/>
    <property type="evidence" value="ECO:0000314"/>
    <property type="project" value="WormBase"/>
</dbReference>
<dbReference type="GO" id="GO:0008375">
    <property type="term" value="F:acetylglucosaminyltransferase activity"/>
    <property type="evidence" value="ECO:0000314"/>
    <property type="project" value="WormBase"/>
</dbReference>
<dbReference type="GO" id="GO:0019899">
    <property type="term" value="F:enzyme binding"/>
    <property type="evidence" value="ECO:0000353"/>
    <property type="project" value="WormBase"/>
</dbReference>
<dbReference type="GO" id="GO:0050508">
    <property type="term" value="F:glucuronosyl-N-acetylglucosaminyl-proteoglycan 4-alpha-N-acetylglucosaminyltransferase activity"/>
    <property type="evidence" value="ECO:0007669"/>
    <property type="project" value="UniProtKB-EC"/>
</dbReference>
<dbReference type="GO" id="GO:0001888">
    <property type="term" value="F:glucuronyl-galactosyl-proteoglycan 4-alpha-N-acetylglucosaminyltransferase activity"/>
    <property type="evidence" value="ECO:0007669"/>
    <property type="project" value="UniProtKB-EC"/>
</dbReference>
<dbReference type="GO" id="GO:0016757">
    <property type="term" value="F:glycosyltransferase activity"/>
    <property type="evidence" value="ECO:0000318"/>
    <property type="project" value="GO_Central"/>
</dbReference>
<dbReference type="GO" id="GO:0042328">
    <property type="term" value="F:heparan sulfate N-acetylglucosaminyltransferase activity"/>
    <property type="evidence" value="ECO:0000314"/>
    <property type="project" value="WormBase"/>
</dbReference>
<dbReference type="GO" id="GO:0046872">
    <property type="term" value="F:metal ion binding"/>
    <property type="evidence" value="ECO:0007669"/>
    <property type="project" value="UniProtKB-KW"/>
</dbReference>
<dbReference type="GO" id="GO:0050509">
    <property type="term" value="F:N-acetylglucosaminyl-proteoglycan 4-beta-glucuronosyltransferase activity"/>
    <property type="evidence" value="ECO:0007669"/>
    <property type="project" value="UniProtKB-EC"/>
</dbReference>
<dbReference type="GO" id="GO:0048598">
    <property type="term" value="P:embryonic morphogenesis"/>
    <property type="evidence" value="ECO:0000315"/>
    <property type="project" value="WormBase"/>
</dbReference>
<dbReference type="GO" id="GO:0015012">
    <property type="term" value="P:heparan sulfate proteoglycan biosynthetic process"/>
    <property type="evidence" value="ECO:0000314"/>
    <property type="project" value="WormBase"/>
</dbReference>
<dbReference type="GO" id="GO:0160094">
    <property type="term" value="P:nematode pharynx development"/>
    <property type="evidence" value="ECO:0000315"/>
    <property type="project" value="WormBase"/>
</dbReference>
<dbReference type="GO" id="GO:0006486">
    <property type="term" value="P:protein glycosylation"/>
    <property type="evidence" value="ECO:0007669"/>
    <property type="project" value="InterPro"/>
</dbReference>
<dbReference type="Gene3D" id="3.90.550.10">
    <property type="entry name" value="Spore Coat Polysaccharide Biosynthesis Protein SpsA, Chain A"/>
    <property type="match status" value="1"/>
</dbReference>
<dbReference type="InterPro" id="IPR004263">
    <property type="entry name" value="Exostosin"/>
</dbReference>
<dbReference type="InterPro" id="IPR040911">
    <property type="entry name" value="Exostosin_GT47"/>
</dbReference>
<dbReference type="InterPro" id="IPR015338">
    <property type="entry name" value="GT64_dom"/>
</dbReference>
<dbReference type="InterPro" id="IPR029044">
    <property type="entry name" value="Nucleotide-diphossugar_trans"/>
</dbReference>
<dbReference type="PANTHER" id="PTHR48261">
    <property type="entry name" value="ACETYLGLUCOSAMINYLTRANSFERASE"/>
    <property type="match status" value="1"/>
</dbReference>
<dbReference type="PANTHER" id="PTHR48261:SF4">
    <property type="entry name" value="EXOSTOSIN LIKE GLYCOSYLTRANSFERASE 3"/>
    <property type="match status" value="1"/>
</dbReference>
<dbReference type="Pfam" id="PF03016">
    <property type="entry name" value="Exostosin_GT47"/>
    <property type="match status" value="1"/>
</dbReference>
<dbReference type="Pfam" id="PF09258">
    <property type="entry name" value="Glyco_transf_64"/>
    <property type="match status" value="1"/>
</dbReference>
<dbReference type="SUPFAM" id="SSF53448">
    <property type="entry name" value="Nucleotide-diphospho-sugar transferases"/>
    <property type="match status" value="1"/>
</dbReference>
<accession>O01705</accession>
<accession>O17920</accession>
<name>EXTL3_CAEEL</name>
<evidence type="ECO:0000250" key="1">
    <source>
        <dbReference type="UniProtKB" id="Q16394"/>
    </source>
</evidence>
<evidence type="ECO:0000250" key="2">
    <source>
        <dbReference type="UniProtKB" id="Q9ES89"/>
    </source>
</evidence>
<evidence type="ECO:0000255" key="3"/>
<evidence type="ECO:0000269" key="4">
    <source>
    </source>
</evidence>
<evidence type="ECO:0000269" key="5">
    <source>
    </source>
</evidence>
<evidence type="ECO:0000269" key="6">
    <source>
    </source>
</evidence>
<evidence type="ECO:0000269" key="7">
    <source>
    </source>
</evidence>
<evidence type="ECO:0000303" key="8">
    <source>
    </source>
</evidence>
<evidence type="ECO:0000303" key="9">
    <source>
    </source>
</evidence>
<evidence type="ECO:0000305" key="10"/>
<evidence type="ECO:0000305" key="11">
    <source>
    </source>
</evidence>
<proteinExistence type="evidence at protein level"/>
<organism>
    <name type="scientific">Caenorhabditis elegans</name>
    <dbReference type="NCBI Taxonomy" id="6239"/>
    <lineage>
        <taxon>Eukaryota</taxon>
        <taxon>Metazoa</taxon>
        <taxon>Ecdysozoa</taxon>
        <taxon>Nematoda</taxon>
        <taxon>Chromadorea</taxon>
        <taxon>Rhabditida</taxon>
        <taxon>Rhabditina</taxon>
        <taxon>Rhabditomorpha</taxon>
        <taxon>Rhabditoidea</taxon>
        <taxon>Rhabditidae</taxon>
        <taxon>Peloderinae</taxon>
        <taxon>Caenorhabditis</taxon>
    </lineage>
</organism>
<reference key="1">
    <citation type="journal article" date="1997" name="Genome Res.">
        <title>The structure of the human multiple exostoses 2 gene and characterization of homologs in mouse and Caenorhabditis elegans.</title>
        <authorList>
            <person name="Clines G.A."/>
            <person name="Ashley J.A."/>
            <person name="Shah S."/>
            <person name="Lovett M."/>
        </authorList>
    </citation>
    <scope>NUCLEOTIDE SEQUENCE [MRNA]</scope>
    <scope>FUNCTION</scope>
    <scope>CATALYTIC ACTIVITY</scope>
    <scope>PATHWAY</scope>
</reference>
<reference key="2">
    <citation type="journal article" date="2001" name="J. Biol. Chem.">
        <title>rib-2, a Caenorhabditis elegans homolog of the human tumor suppressor EXT genes encodes a novel alpha1,4-N-acetylglucosaminyltransferase involved in the biosynthetic initiation and elongation of heparan sulfate.</title>
        <authorList>
            <person name="Kitagawa H."/>
            <person name="Egusa N."/>
            <person name="Tamura J."/>
            <person name="Kusche-Gullberg M."/>
            <person name="Lindahl U."/>
            <person name="Sugahara K."/>
        </authorList>
    </citation>
    <scope>NUCLEOTIDE SEQUENCE [MRNA]</scope>
</reference>
<reference key="3">
    <citation type="journal article" date="1998" name="Science">
        <title>Genome sequence of the nematode C. elegans: a platform for investigating biology.</title>
        <authorList>
            <consortium name="The C. elegans sequencing consortium"/>
        </authorList>
    </citation>
    <scope>NUCLEOTIDE SEQUENCE [LARGE SCALE GENOMIC DNA]</scope>
    <source>
        <strain>Bristol N2</strain>
    </source>
</reference>
<reference key="4">
    <citation type="journal article" date="2006" name="Dev. Biol.">
        <title>C. elegans pharyngeal morphogenesis requires both de novo synthesis of pyrimidines and synthesis of heparan sulfate proteoglycans.</title>
        <authorList>
            <person name="Franks D.M."/>
            <person name="Izumikawa T."/>
            <person name="Kitagawa H."/>
            <person name="Sugahara K."/>
            <person name="Okkema P.G."/>
        </authorList>
    </citation>
    <scope>FUNCTION</scope>
</reference>
<reference key="5">
    <citation type="journal article" date="2007" name="J. Biol. Chem.">
        <title>Expression of rib-1, a Caenorhabditis elegans homolog of the human tumor suppressor EXT genes, is indispensable for heparan sulfate synthesis and embryonic morphogenesis.</title>
        <authorList>
            <person name="Kitagawa H."/>
            <person name="Izumikawa T."/>
            <person name="Mizuguchi S."/>
            <person name="Dejima K."/>
            <person name="Nomura K.H."/>
            <person name="Egusa N."/>
            <person name="Taniguchi F."/>
            <person name="Tamura J."/>
            <person name="Gengyo-Ando K."/>
            <person name="Mitani S."/>
            <person name="Nomura K."/>
            <person name="Sugahara K."/>
        </authorList>
    </citation>
    <scope>FUNCTION</scope>
    <scope>CATALYTIC ACTIVITY</scope>
    <scope>ACTIVITY REGULATION</scope>
    <scope>PATHWAY</scope>
    <scope>INTERACTION WITH RIB-1</scope>
    <scope>DISRUPTION PHENOTYPE</scope>
</reference>
<reference key="6">
    <citation type="journal article" date="2013" name="Science">
        <title>An epidermal microRNA regulates neuronal migration through control of the cellular glycosylation state.</title>
        <authorList>
            <person name="Pedersen M.E."/>
            <person name="Snieckute G."/>
            <person name="Kagias K."/>
            <person name="Nehammer C."/>
            <person name="Multhaupt H.A."/>
            <person name="Couchman J.R."/>
            <person name="Pocock R."/>
        </authorList>
    </citation>
    <scope>FUNCTION</scope>
    <scope>DISRUPTION PHENOTYPE</scope>
</reference>
<sequence>MAIKLNGSSRSFVPSLRVSAFLIFIFFVITYIIIYNVSFSEPSWITQDALKQNIENLDDYDASCSGYSIGRILREQKRILASVRLELTESQVKIEEIRTVQEELQRLIPQKQLELSALEGEIEAAQRQLEELRETQNVKVFLPFSPLQIPRELEQPSQISPNQLDDIIDYSRCSISSFMPVYVDIITSGQSEKEWLNVFQEVIPNLVETPDKACIKIHISNGIASPNTTFNSILFNVGSPIINFQSKSIHVQASKIRSFDFPVDVNHIAVEKVDLTPLLPFQRENLISLIVDNTELNFSAFSSLSAEPSRRPIVIVKCSQENCSLERRRQLIGSSTFCFLLPSEMFFQDFLSSLQLGCIPIILSNSQLLPFQDLIDWRRATYRLPLARLPEAHFIVQSFEISDIIEMRRVGRLFYETYLADRHLLARSLLAALRYKLQIPTREVRRNQAIPLFNSSFTAPKGSVVNVQANFDDEYLLGPLESRVESTSYAYNFTEFQLYSYDFWNIIMSPHYTKEFLVNAAELPTEAEFFEDTKIGFRPIEPGSGAEFSKALGGNRQREQFTVVLLTYERDAVLTGALERLHQLPYLNKIIVVWNNVNRDPPDTWPSLHIPVEFIRVAENNLNNRFVPWDRIETEAVLSLDDDIDLMQQEIILAFRVWRENRDRIVGFPARHHARYGDSMFYNSNHTCQMSMILTGAAFIHKNYLTAYTYEMPAEIREHVNSIKNCEDIAMNYLVSHLTRKPPIKTTSRWTLKCPTCTESLYKEGTHFEKRHECMRLFTKIYGYNPLKFSQFRADSILFKTRLPQNHQKCFKYV</sequence>
<comment type="function">
    <text evidence="4 5 6 7">Glycosyltransferase required for the biosynthesis of heparan sulfate (PubMed:11121397, PubMed:16828468, PubMed:17237233). Initiates heparan sulfate synthesis by transferring GlcNAc to the (GlcA-Gal-Gal-Xyl-)Ser core linker (GlcNAcT-I activity) (PubMed:11121397). In association with rib-1, is also responsible for the alternating addition of beta-1-4-linked glucuronic acid (GlcA) and alpha-1-4-linked N-acetylglucosamine (GlcNAc) units to nascent heparan sulfate chains (GlcNAcT-II and GlcAT-II activities) (PubMed:11121397, PubMed:17237233). Required for normal ventral epidermal enclosure during the early stages of embryonic development (PubMed:17237233). In addition, involved in the elongation of the pharyngeal isthmus during the later stages of embryonic development (PubMed:16828468). Involved in the directed migration of hermaphrodite-specific neurons (PubMed:17237233, PubMed:24052309).</text>
</comment>
<comment type="catalytic activity">
    <reaction evidence="4 6">
        <text>3-O-(beta-D-GlcA-(1-&gt;3)-beta-D-Gal-(1-&gt;3)-beta-D-Gal-(1-&gt;4)-beta-D-Xyl)-L-seryl-[protein] + UDP-N-acetyl-alpha-D-glucosamine = 3-O-(alpha-D-GlcNAc-(1-&gt;4)-beta-D-GlcA-(1-&gt;3)-beta-D-Gal-(1-&gt;3)-beta-D-Gal-(1-&gt;4)-beta-D-Xyl)-L-seryl-[protein] + UDP + H(+)</text>
        <dbReference type="Rhea" id="RHEA:16221"/>
        <dbReference type="Rhea" id="RHEA-COMP:12573"/>
        <dbReference type="Rhea" id="RHEA-COMP:12574"/>
        <dbReference type="ChEBI" id="CHEBI:15378"/>
        <dbReference type="ChEBI" id="CHEBI:57705"/>
        <dbReference type="ChEBI" id="CHEBI:58223"/>
        <dbReference type="ChEBI" id="CHEBI:132093"/>
        <dbReference type="ChEBI" id="CHEBI:132104"/>
        <dbReference type="EC" id="2.4.1.223"/>
    </reaction>
</comment>
<comment type="catalytic activity">
    <reaction evidence="4 6">
        <text>3-O-{[(1-&gt;4)-beta-D-GlcA-(1-&gt;4)-alpha-D-GlcNAc](n)-(1-&gt;4)-beta-D-GlcA-(1-&gt;3)-beta-D-Gal-(1-&gt;3)-beta-D-Gal-(1-&gt;4)-beta-D-Xyl}-L-seryl-[protein] + UDP-N-acetyl-alpha-D-glucosamine = 3-O-{alpha-D-GlcNAc-[(1-&gt;4)-beta-D-GlcA-(1-&gt;4)-alpha-D-GlcNAc](n)-(1-&gt;4)-beta-D-GlcA-(1-&gt;3)-beta-D-Gal-(1-&gt;3)-beta-D-Gal-(1-&gt;4)-beta-D-Xyl}-L-seryl-[protein] + UDP + H(+)</text>
        <dbReference type="Rhea" id="RHEA:16213"/>
        <dbReference type="Rhea" id="RHEA-COMP:12621"/>
        <dbReference type="Rhea" id="RHEA-COMP:12623"/>
        <dbReference type="ChEBI" id="CHEBI:15378"/>
        <dbReference type="ChEBI" id="CHEBI:57705"/>
        <dbReference type="ChEBI" id="CHEBI:58223"/>
        <dbReference type="ChEBI" id="CHEBI:132415"/>
        <dbReference type="ChEBI" id="CHEBI:132416"/>
        <dbReference type="EC" id="2.4.1.224"/>
    </reaction>
</comment>
<comment type="catalytic activity">
    <reaction evidence="6">
        <text>3-O-{alpha-D-GlcNAc-[(1-&gt;4)-beta-D-GlcA-(1-&gt;4)-alpha-D-GlcNAc](n)-(1-&gt;4)-beta-D-GlcA-(1-&gt;3)-beta-D-Gal-(1-&gt;3)-beta-D-Gal-(1-&gt;4)-beta-D-Xyl}-L-seryl-[protein] + UDP-alpha-D-glucuronate = 3-O-{[(1-&gt;4)-beta-D-GlcA-(1-&gt;4)-alpha-D-GlcNAc](n+1)-(1-&gt;4)-beta-D-GlcA-(1-&gt;3)-beta-D-Gal-(1-&gt;3)-beta-D-Gal-(1-&gt;4)-beta-D-Xyl}-L-seryl-[protein] + UDP + H(+)</text>
        <dbReference type="Rhea" id="RHEA:20908"/>
        <dbReference type="Rhea" id="RHEA-COMP:12623"/>
        <dbReference type="Rhea" id="RHEA-COMP:14295"/>
        <dbReference type="ChEBI" id="CHEBI:15378"/>
        <dbReference type="ChEBI" id="CHEBI:58052"/>
        <dbReference type="ChEBI" id="CHEBI:58223"/>
        <dbReference type="ChEBI" id="CHEBI:132415"/>
        <dbReference type="ChEBI" id="CHEBI:132416"/>
        <dbReference type="EC" id="2.4.1.225"/>
    </reaction>
</comment>
<comment type="cofactor">
    <cofactor evidence="2">
        <name>Mn(2+)</name>
        <dbReference type="ChEBI" id="CHEBI:29035"/>
    </cofactor>
</comment>
<comment type="activity regulation">
    <text evidence="6">Binding to rib-1 is required for GlcAT-II activity and for increasing GlcNAc-II activity in vitro.</text>
</comment>
<comment type="pathway">
    <text evidence="4 6">Glycan metabolism; heparan sulfate biosynthesis.</text>
</comment>
<comment type="subunit">
    <text evidence="6">Interacts with rib-1.</text>
</comment>
<comment type="subcellular location">
    <subcellularLocation>
        <location evidence="1">Endoplasmic reticulum membrane</location>
        <topology evidence="1">Single-pass type II membrane protein</topology>
    </subcellularLocation>
    <subcellularLocation>
        <location evidence="1">Golgi apparatus membrane</location>
        <topology evidence="1">Single-pass type II membrane protein</topology>
    </subcellularLocation>
</comment>
<comment type="disruption phenotype">
    <text evidence="6 7">Mutant embryos are arrested at the 1-fold stage due to a failure in epidermal enclosure (PubMed:17237233). RNAi-mediated knockdown results in the failure of hermaphrodite-specific neurons to migrate to their correct position and in a defect in axonal guidance (PubMed:24052309).</text>
</comment>
<comment type="similarity">
    <text evidence="10">Belongs to the glycosyltransferase 47 family.</text>
</comment>